<sequence length="156" mass="17592">MFNVVLVAPEIPPNTGNVIRLCANTGAHLHLIEPLGFPLDDARMRRAGLDYHEYAQMRVHRDWDAFVAAETPDPARMFAFTTRGSGRFHDHAFLSGDWFVFGSETRGLPAELLERFPNEQRVRLPMRPDNRSLNLSNTVAVVVFEAWRQAGFEGGA</sequence>
<feature type="chain" id="PRO_0000401944" description="tRNA (cytidine(34)-2'-O)-methyltransferase">
    <location>
        <begin position="1"/>
        <end position="156"/>
    </location>
</feature>
<feature type="binding site" evidence="1">
    <location>
        <position position="102"/>
    </location>
    <ligand>
        <name>S-adenosyl-L-methionine</name>
        <dbReference type="ChEBI" id="CHEBI:59789"/>
    </ligand>
</feature>
<feature type="binding site" evidence="1">
    <location>
        <position position="124"/>
    </location>
    <ligand>
        <name>S-adenosyl-L-methionine</name>
        <dbReference type="ChEBI" id="CHEBI:59789"/>
    </ligand>
</feature>
<feature type="binding site" evidence="1">
    <location>
        <position position="132"/>
    </location>
    <ligand>
        <name>S-adenosyl-L-methionine</name>
        <dbReference type="ChEBI" id="CHEBI:59789"/>
    </ligand>
</feature>
<proteinExistence type="inferred from homology"/>
<organism>
    <name type="scientific">Burkholderia cenocepacia (strain HI2424)</name>
    <dbReference type="NCBI Taxonomy" id="331272"/>
    <lineage>
        <taxon>Bacteria</taxon>
        <taxon>Pseudomonadati</taxon>
        <taxon>Pseudomonadota</taxon>
        <taxon>Betaproteobacteria</taxon>
        <taxon>Burkholderiales</taxon>
        <taxon>Burkholderiaceae</taxon>
        <taxon>Burkholderia</taxon>
        <taxon>Burkholderia cepacia complex</taxon>
    </lineage>
</organism>
<accession>A0KAS4</accession>
<evidence type="ECO:0000255" key="1">
    <source>
        <dbReference type="HAMAP-Rule" id="MF_01885"/>
    </source>
</evidence>
<evidence type="ECO:0000305" key="2"/>
<name>TRML_BURCH</name>
<gene>
    <name evidence="1" type="primary">trmL</name>
    <name type="ordered locus">Bcen2424_2851</name>
</gene>
<dbReference type="EC" id="2.1.1.207" evidence="1"/>
<dbReference type="EMBL" id="CP000458">
    <property type="protein sequence ID" value="ABK09601.1"/>
    <property type="status" value="ALT_INIT"/>
    <property type="molecule type" value="Genomic_DNA"/>
</dbReference>
<dbReference type="RefSeq" id="WP_041489610.1">
    <property type="nucleotide sequence ID" value="NC_008542.1"/>
</dbReference>
<dbReference type="SMR" id="A0KAS4"/>
<dbReference type="KEGG" id="bch:Bcen2424_2851"/>
<dbReference type="HOGENOM" id="CLU_110125_1_0_4"/>
<dbReference type="GO" id="GO:0005737">
    <property type="term" value="C:cytoplasm"/>
    <property type="evidence" value="ECO:0007669"/>
    <property type="project" value="UniProtKB-SubCell"/>
</dbReference>
<dbReference type="GO" id="GO:0003723">
    <property type="term" value="F:RNA binding"/>
    <property type="evidence" value="ECO:0007669"/>
    <property type="project" value="InterPro"/>
</dbReference>
<dbReference type="GO" id="GO:0141102">
    <property type="term" value="F:tRNA (5-carboxymethylaminomethyluridine(34)-2'-O)-methyltransferase activity"/>
    <property type="evidence" value="ECO:0007669"/>
    <property type="project" value="RHEA"/>
</dbReference>
<dbReference type="GO" id="GO:0141098">
    <property type="term" value="F:tRNA (cytidine(34)-2'-O)-methyltransferase activity"/>
    <property type="evidence" value="ECO:0007669"/>
    <property type="project" value="RHEA"/>
</dbReference>
<dbReference type="GO" id="GO:0002131">
    <property type="term" value="P:wobble position cytosine ribose methylation"/>
    <property type="evidence" value="ECO:0007669"/>
    <property type="project" value="TreeGrafter"/>
</dbReference>
<dbReference type="GO" id="GO:0002132">
    <property type="term" value="P:wobble position uridine ribose methylation"/>
    <property type="evidence" value="ECO:0007669"/>
    <property type="project" value="TreeGrafter"/>
</dbReference>
<dbReference type="CDD" id="cd18094">
    <property type="entry name" value="SpoU-like_TrmL"/>
    <property type="match status" value="1"/>
</dbReference>
<dbReference type="FunFam" id="3.40.1280.10:FF:000002">
    <property type="entry name" value="Peptidylprolyl isomerase"/>
    <property type="match status" value="1"/>
</dbReference>
<dbReference type="Gene3D" id="3.40.1280.10">
    <property type="match status" value="1"/>
</dbReference>
<dbReference type="HAMAP" id="MF_01885">
    <property type="entry name" value="tRNA_methyltr_TrmL"/>
    <property type="match status" value="1"/>
</dbReference>
<dbReference type="InterPro" id="IPR029028">
    <property type="entry name" value="Alpha/beta_knot_MTases"/>
</dbReference>
<dbReference type="InterPro" id="IPR001537">
    <property type="entry name" value="SpoU_MeTrfase"/>
</dbReference>
<dbReference type="InterPro" id="IPR016914">
    <property type="entry name" value="TrmL"/>
</dbReference>
<dbReference type="InterPro" id="IPR029026">
    <property type="entry name" value="tRNA_m1G_MTases_N"/>
</dbReference>
<dbReference type="NCBIfam" id="TIGR00185">
    <property type="entry name" value="tRNA_yibK_trmL"/>
    <property type="match status" value="1"/>
</dbReference>
<dbReference type="PANTHER" id="PTHR42971">
    <property type="entry name" value="TRNA (CYTIDINE(34)-2'-O)-METHYLTRANSFERASE"/>
    <property type="match status" value="1"/>
</dbReference>
<dbReference type="PANTHER" id="PTHR42971:SF1">
    <property type="entry name" value="TRNA (CYTIDINE(34)-2'-O)-METHYLTRANSFERASE"/>
    <property type="match status" value="1"/>
</dbReference>
<dbReference type="Pfam" id="PF00588">
    <property type="entry name" value="SpoU_methylase"/>
    <property type="match status" value="1"/>
</dbReference>
<dbReference type="PIRSF" id="PIRSF029256">
    <property type="entry name" value="SpoU_TrmH_prd"/>
    <property type="match status" value="1"/>
</dbReference>
<dbReference type="SUPFAM" id="SSF75217">
    <property type="entry name" value="alpha/beta knot"/>
    <property type="match status" value="1"/>
</dbReference>
<keyword id="KW-0963">Cytoplasm</keyword>
<keyword id="KW-0489">Methyltransferase</keyword>
<keyword id="KW-0949">S-adenosyl-L-methionine</keyword>
<keyword id="KW-0808">Transferase</keyword>
<keyword id="KW-0819">tRNA processing</keyword>
<reference key="1">
    <citation type="submission" date="2006-08" db="EMBL/GenBank/DDBJ databases">
        <title>Complete sequence of chromosome 1 of Burkholderia cenocepacia HI2424.</title>
        <authorList>
            <person name="Copeland A."/>
            <person name="Lucas S."/>
            <person name="Lapidus A."/>
            <person name="Barry K."/>
            <person name="Detter J.C."/>
            <person name="Glavina del Rio T."/>
            <person name="Hammon N."/>
            <person name="Israni S."/>
            <person name="Pitluck S."/>
            <person name="Chain P."/>
            <person name="Malfatti S."/>
            <person name="Shin M."/>
            <person name="Vergez L."/>
            <person name="Schmutz J."/>
            <person name="Larimer F."/>
            <person name="Land M."/>
            <person name="Hauser L."/>
            <person name="Kyrpides N."/>
            <person name="Kim E."/>
            <person name="LiPuma J.J."/>
            <person name="Gonzalez C.F."/>
            <person name="Konstantinidis K."/>
            <person name="Tiedje J.M."/>
            <person name="Richardson P."/>
        </authorList>
    </citation>
    <scope>NUCLEOTIDE SEQUENCE [LARGE SCALE GENOMIC DNA]</scope>
    <source>
        <strain>HI2424</strain>
    </source>
</reference>
<protein>
    <recommendedName>
        <fullName evidence="1">tRNA (cytidine(34)-2'-O)-methyltransferase</fullName>
        <ecNumber evidence="1">2.1.1.207</ecNumber>
    </recommendedName>
    <alternativeName>
        <fullName evidence="1">tRNA (cytidine/uridine-2'-O-)-methyltransferase TrmL</fullName>
    </alternativeName>
</protein>
<comment type="function">
    <text evidence="1">Methylates the ribose at the nucleotide 34 wobble position in the two leucyl isoacceptors tRNA(Leu)(CmAA) and tRNA(Leu)(cmnm5UmAA). Catalyzes the methyl transfer from S-adenosyl-L-methionine to the 2'-OH of the wobble nucleotide.</text>
</comment>
<comment type="catalytic activity">
    <reaction evidence="1">
        <text>cytidine(34) in tRNA + S-adenosyl-L-methionine = 2'-O-methylcytidine(34) in tRNA + S-adenosyl-L-homocysteine + H(+)</text>
        <dbReference type="Rhea" id="RHEA:43084"/>
        <dbReference type="Rhea" id="RHEA-COMP:10331"/>
        <dbReference type="Rhea" id="RHEA-COMP:10332"/>
        <dbReference type="ChEBI" id="CHEBI:15378"/>
        <dbReference type="ChEBI" id="CHEBI:57856"/>
        <dbReference type="ChEBI" id="CHEBI:59789"/>
        <dbReference type="ChEBI" id="CHEBI:74495"/>
        <dbReference type="ChEBI" id="CHEBI:82748"/>
        <dbReference type="EC" id="2.1.1.207"/>
    </reaction>
</comment>
<comment type="catalytic activity">
    <reaction evidence="1">
        <text>5-carboxymethylaminomethyluridine(34) in tRNA(Leu) + S-adenosyl-L-methionine = 5-carboxymethylaminomethyl-2'-O-methyluridine(34) in tRNA(Leu) + S-adenosyl-L-homocysteine + H(+)</text>
        <dbReference type="Rhea" id="RHEA:43088"/>
        <dbReference type="Rhea" id="RHEA-COMP:10333"/>
        <dbReference type="Rhea" id="RHEA-COMP:10334"/>
        <dbReference type="ChEBI" id="CHEBI:15378"/>
        <dbReference type="ChEBI" id="CHEBI:57856"/>
        <dbReference type="ChEBI" id="CHEBI:59789"/>
        <dbReference type="ChEBI" id="CHEBI:74508"/>
        <dbReference type="ChEBI" id="CHEBI:74511"/>
        <dbReference type="EC" id="2.1.1.207"/>
    </reaction>
</comment>
<comment type="subunit">
    <text evidence="1">Homodimer.</text>
</comment>
<comment type="subcellular location">
    <subcellularLocation>
        <location evidence="1">Cytoplasm</location>
    </subcellularLocation>
</comment>
<comment type="similarity">
    <text evidence="1">Belongs to the class IV-like SAM-binding methyltransferase superfamily. RNA methyltransferase TrmH family. TrmL subfamily.</text>
</comment>
<comment type="sequence caution" evidence="2">
    <conflict type="erroneous initiation">
        <sequence resource="EMBL-CDS" id="ABK09601"/>
    </conflict>
    <text>Extended N-terminus.</text>
</comment>